<feature type="signal peptide" evidence="1">
    <location>
        <begin position="1"/>
        <end position="18"/>
    </location>
</feature>
<feature type="chain" id="PRO_0000331216" description="Stromal cell-derived factor 2">
    <location>
        <begin position="19"/>
        <end position="211"/>
    </location>
</feature>
<feature type="domain" description="MIR 1" evidence="2">
    <location>
        <begin position="21"/>
        <end position="75"/>
    </location>
</feature>
<feature type="domain" description="MIR 2" evidence="2">
    <location>
        <begin position="83"/>
        <end position="138"/>
    </location>
</feature>
<feature type="domain" description="MIR 3" evidence="2">
    <location>
        <begin position="139"/>
        <end position="193"/>
    </location>
</feature>
<sequence>MAVVSLLLFGGLWSAVGSSNLAVVTCGSVVKLLNTRHNVRLHSHDVRYGSGSGQQSVTGVTSVDDSNSYWRIRGKTATVCERGTPIRCGQPIRLTHVNTGRNLHSHHFTSPLSGNQEVSAFGEEGEGDYLDDWTVLCNGPYWVRDGEVRFKHSSTEVLLSVTGEQYGRPISGQKEVHGMAQPSQNNYWKAMEGIFMKPSELLKAEGHHTEL</sequence>
<proteinExistence type="evidence at transcript level"/>
<keyword id="KW-1185">Reference proteome</keyword>
<keyword id="KW-0677">Repeat</keyword>
<keyword id="KW-0964">Secreted</keyword>
<keyword id="KW-0732">Signal</keyword>
<evidence type="ECO:0000255" key="1"/>
<evidence type="ECO:0000255" key="2">
    <source>
        <dbReference type="PROSITE-ProRule" id="PRU00131"/>
    </source>
</evidence>
<evidence type="ECO:0000305" key="3"/>
<accession>Q3SZ45</accession>
<protein>
    <recommendedName>
        <fullName>Stromal cell-derived factor 2</fullName>
        <shortName>SDF-2</shortName>
    </recommendedName>
</protein>
<comment type="subcellular location">
    <subcellularLocation>
        <location evidence="3">Secreted</location>
    </subcellularLocation>
</comment>
<organism>
    <name type="scientific">Bos taurus</name>
    <name type="common">Bovine</name>
    <dbReference type="NCBI Taxonomy" id="9913"/>
    <lineage>
        <taxon>Eukaryota</taxon>
        <taxon>Metazoa</taxon>
        <taxon>Chordata</taxon>
        <taxon>Craniata</taxon>
        <taxon>Vertebrata</taxon>
        <taxon>Euteleostomi</taxon>
        <taxon>Mammalia</taxon>
        <taxon>Eutheria</taxon>
        <taxon>Laurasiatheria</taxon>
        <taxon>Artiodactyla</taxon>
        <taxon>Ruminantia</taxon>
        <taxon>Pecora</taxon>
        <taxon>Bovidae</taxon>
        <taxon>Bovinae</taxon>
        <taxon>Bos</taxon>
    </lineage>
</organism>
<gene>
    <name type="primary">SDF2</name>
</gene>
<reference key="1">
    <citation type="submission" date="2005-08" db="EMBL/GenBank/DDBJ databases">
        <authorList>
            <consortium name="NIH - Mammalian Gene Collection (MGC) project"/>
        </authorList>
    </citation>
    <scope>NUCLEOTIDE SEQUENCE [LARGE SCALE MRNA]</scope>
    <source>
        <strain>Hereford</strain>
        <tissue>Heart ventricle</tissue>
    </source>
</reference>
<name>SDF2_BOVIN</name>
<dbReference type="EMBL" id="BC103155">
    <property type="protein sequence ID" value="AAI03156.1"/>
    <property type="molecule type" value="mRNA"/>
</dbReference>
<dbReference type="RefSeq" id="NP_001029493.1">
    <property type="nucleotide sequence ID" value="NM_001034321.1"/>
</dbReference>
<dbReference type="SMR" id="Q3SZ45"/>
<dbReference type="FunCoup" id="Q3SZ45">
    <property type="interactions" value="3524"/>
</dbReference>
<dbReference type="STRING" id="9913.ENSBTAP00000073145"/>
<dbReference type="PaxDb" id="9913-ENSBTAP00000017066"/>
<dbReference type="GeneID" id="508463"/>
<dbReference type="KEGG" id="bta:508463"/>
<dbReference type="CTD" id="6388"/>
<dbReference type="VEuPathDB" id="HostDB:ENSBTAG00000012845"/>
<dbReference type="eggNOG" id="KOG3358">
    <property type="taxonomic scope" value="Eukaryota"/>
</dbReference>
<dbReference type="HOGENOM" id="CLU_078126_1_0_1"/>
<dbReference type="InParanoid" id="Q3SZ45"/>
<dbReference type="OMA" id="NYWRAME"/>
<dbReference type="OrthoDB" id="5588846at2759"/>
<dbReference type="TreeFam" id="TF314557"/>
<dbReference type="Proteomes" id="UP000009136">
    <property type="component" value="Chromosome 19"/>
</dbReference>
<dbReference type="Bgee" id="ENSBTAG00000012845">
    <property type="expression patterns" value="Expressed in retina and 102 other cell types or tissues"/>
</dbReference>
<dbReference type="GO" id="GO:0005576">
    <property type="term" value="C:extracellular region"/>
    <property type="evidence" value="ECO:0007669"/>
    <property type="project" value="UniProtKB-SubCell"/>
</dbReference>
<dbReference type="CDD" id="cd23293">
    <property type="entry name" value="beta-trefoil_MIR_SDF2_meta"/>
    <property type="match status" value="1"/>
</dbReference>
<dbReference type="FunFam" id="2.80.10.50:FF:000023">
    <property type="entry name" value="Stromal cell-derived factor 2-like 1"/>
    <property type="match status" value="1"/>
</dbReference>
<dbReference type="Gene3D" id="2.80.10.50">
    <property type="match status" value="1"/>
</dbReference>
<dbReference type="InterPro" id="IPR036300">
    <property type="entry name" value="MIR_dom_sf"/>
</dbReference>
<dbReference type="InterPro" id="IPR016093">
    <property type="entry name" value="MIR_motif"/>
</dbReference>
<dbReference type="PANTHER" id="PTHR46809:SF3">
    <property type="entry name" value="STROMAL CELL-DERIVED FACTOR 2"/>
    <property type="match status" value="1"/>
</dbReference>
<dbReference type="PANTHER" id="PTHR46809">
    <property type="entry name" value="STROMAL CELL-DERIVED FACTOR 2-LIKE PROTEIN"/>
    <property type="match status" value="1"/>
</dbReference>
<dbReference type="Pfam" id="PF02815">
    <property type="entry name" value="MIR"/>
    <property type="match status" value="1"/>
</dbReference>
<dbReference type="SMART" id="SM00472">
    <property type="entry name" value="MIR"/>
    <property type="match status" value="3"/>
</dbReference>
<dbReference type="SUPFAM" id="SSF82109">
    <property type="entry name" value="MIR domain"/>
    <property type="match status" value="1"/>
</dbReference>
<dbReference type="PROSITE" id="PS50919">
    <property type="entry name" value="MIR"/>
    <property type="match status" value="3"/>
</dbReference>